<organism evidence="7">
    <name type="scientific">Rhizopus delemar (strain RA 99-880 / ATCC MYA-4621 / FGSC 9543 / NRRL 43880)</name>
    <name type="common">Mucormycosis agent</name>
    <name type="synonym">Rhizopus arrhizus var. delemar</name>
    <dbReference type="NCBI Taxonomy" id="246409"/>
    <lineage>
        <taxon>Eukaryota</taxon>
        <taxon>Fungi</taxon>
        <taxon>Fungi incertae sedis</taxon>
        <taxon>Mucoromycota</taxon>
        <taxon>Mucoromycotina</taxon>
        <taxon>Mucoromycetes</taxon>
        <taxon>Mucorales</taxon>
        <taxon>Mucorineae</taxon>
        <taxon>Rhizopodaceae</taxon>
        <taxon>Rhizopus</taxon>
    </lineage>
</organism>
<keyword id="KW-0326">Glycosidase</keyword>
<keyword id="KW-0378">Hydrolase</keyword>
<keyword id="KW-0472">Membrane</keyword>
<keyword id="KW-1185">Reference proteome</keyword>
<dbReference type="EC" id="3.2.1.45" evidence="3"/>
<dbReference type="EMBL" id="CH476733">
    <property type="protein sequence ID" value="EIE79467.1"/>
    <property type="molecule type" value="Genomic_DNA"/>
</dbReference>
<dbReference type="SMR" id="I1BTD7"/>
<dbReference type="STRING" id="246409.I1BTD7"/>
<dbReference type="VEuPathDB" id="FungiDB:RO3G_04172"/>
<dbReference type="eggNOG" id="ENOG502QPU8">
    <property type="taxonomic scope" value="Eukaryota"/>
</dbReference>
<dbReference type="InParanoid" id="I1BTD7"/>
<dbReference type="OMA" id="NEFIPPW"/>
<dbReference type="OrthoDB" id="56650at4827"/>
<dbReference type="Proteomes" id="UP000009138">
    <property type="component" value="Unassembled WGS sequence"/>
</dbReference>
<dbReference type="GO" id="GO:0016020">
    <property type="term" value="C:membrane"/>
    <property type="evidence" value="ECO:0007669"/>
    <property type="project" value="UniProtKB-SubCell"/>
</dbReference>
<dbReference type="GO" id="GO:0004348">
    <property type="term" value="F:glucosylceramidase activity"/>
    <property type="evidence" value="ECO:0000314"/>
    <property type="project" value="UniProtKB"/>
</dbReference>
<dbReference type="GO" id="GO:0050295">
    <property type="term" value="F:steryl-beta-glucosidase activity"/>
    <property type="evidence" value="ECO:0007669"/>
    <property type="project" value="TreeGrafter"/>
</dbReference>
<dbReference type="GO" id="GO:1904462">
    <property type="term" value="P:ergosteryl 3-beta-D-glucoside catabolic process"/>
    <property type="evidence" value="ECO:0007669"/>
    <property type="project" value="TreeGrafter"/>
</dbReference>
<dbReference type="GO" id="GO:0006680">
    <property type="term" value="P:glucosylceramide catabolic process"/>
    <property type="evidence" value="ECO:0000314"/>
    <property type="project" value="UniProtKB"/>
</dbReference>
<dbReference type="GO" id="GO:0043094">
    <property type="term" value="P:metabolic compound salvage"/>
    <property type="evidence" value="ECO:0000250"/>
    <property type="project" value="UniProtKB"/>
</dbReference>
<dbReference type="GO" id="GO:0000272">
    <property type="term" value="P:polysaccharide catabolic process"/>
    <property type="evidence" value="ECO:0007669"/>
    <property type="project" value="InterPro"/>
</dbReference>
<dbReference type="Gene3D" id="3.20.20.80">
    <property type="entry name" value="Glycosidases"/>
    <property type="match status" value="1"/>
</dbReference>
<dbReference type="Gene3D" id="2.60.40.1180">
    <property type="entry name" value="Golgi alpha-mannosidase II"/>
    <property type="match status" value="1"/>
</dbReference>
<dbReference type="InterPro" id="IPR041036">
    <property type="entry name" value="GH5_C"/>
</dbReference>
<dbReference type="InterPro" id="IPR001547">
    <property type="entry name" value="Glyco_hydro_5"/>
</dbReference>
<dbReference type="InterPro" id="IPR013780">
    <property type="entry name" value="Glyco_hydro_b"/>
</dbReference>
<dbReference type="InterPro" id="IPR017853">
    <property type="entry name" value="Glycoside_hydrolase_SF"/>
</dbReference>
<dbReference type="InterPro" id="IPR052066">
    <property type="entry name" value="Glycosphingolipid_Hydrolases"/>
</dbReference>
<dbReference type="PANTHER" id="PTHR31308">
    <property type="match status" value="1"/>
</dbReference>
<dbReference type="PANTHER" id="PTHR31308:SF5">
    <property type="entry name" value="ERGOSTERYL-BETA-GLUCOSIDASE"/>
    <property type="match status" value="1"/>
</dbReference>
<dbReference type="Pfam" id="PF00150">
    <property type="entry name" value="Cellulase"/>
    <property type="match status" value="1"/>
</dbReference>
<dbReference type="Pfam" id="PF18564">
    <property type="entry name" value="Glyco_hydro_5_C"/>
    <property type="match status" value="1"/>
</dbReference>
<dbReference type="SUPFAM" id="SSF51445">
    <property type="entry name" value="(Trans)glycosidases"/>
    <property type="match status" value="1"/>
</dbReference>
<name>EGCR1_RHIO9</name>
<comment type="function">
    <text evidence="1 3">Specifically hydrolyzes the glucosidic linkage in glucosylceramide (PubMed:22072709). May prevent accumulation of aberrent glucosylceramide containing immature ceramide (By similarity).</text>
</comment>
<comment type="catalytic activity">
    <reaction evidence="3">
        <text>a beta-D-glucosyl-(1&lt;-&gt;1')-N-acylsphing-4-enine + H2O = an N-acylsphing-4-enine + D-glucose</text>
        <dbReference type="Rhea" id="RHEA:13269"/>
        <dbReference type="ChEBI" id="CHEBI:4167"/>
        <dbReference type="ChEBI" id="CHEBI:15377"/>
        <dbReference type="ChEBI" id="CHEBI:22801"/>
        <dbReference type="ChEBI" id="CHEBI:52639"/>
        <dbReference type="EC" id="3.2.1.45"/>
    </reaction>
    <physiologicalReaction direction="left-to-right" evidence="3">
        <dbReference type="Rhea" id="RHEA:13270"/>
    </physiologicalReaction>
</comment>
<comment type="activity regulation">
    <text evidence="3">Inhibited by metal cations Co(2+), Cu(2+), Ni(2+), Pb(2+) and Zn(2+) (PubMed:22072709). Not inhibited by metal chelator ethylenediaminetetraacetic acid (EDTA) (PubMed:22072709).</text>
</comment>
<comment type="biophysicochemical properties">
    <phDependence>
        <text evidence="3">Optimum pH is 7.5.</text>
    </phDependence>
    <temperatureDependence>
        <text evidence="3">Optimum temperature is 30 degrees Celsius.</text>
    </temperatureDependence>
</comment>
<comment type="subcellular location">
    <subcellularLocation>
        <location evidence="5">Membrane</location>
        <topology evidence="5">Peripheral membrane protein</topology>
    </subcellularLocation>
</comment>
<comment type="similarity">
    <text evidence="5">Belongs to the glycosyl hydrolase 5 (cellulase A) family.</text>
</comment>
<evidence type="ECO:0000250" key="1">
    <source>
        <dbReference type="UniProtKB" id="H1AE12"/>
    </source>
</evidence>
<evidence type="ECO:0000250" key="2">
    <source>
        <dbReference type="UniProtKB" id="O85465"/>
    </source>
</evidence>
<evidence type="ECO:0000269" key="3">
    <source>
    </source>
</evidence>
<evidence type="ECO:0000303" key="4">
    <source>
    </source>
</evidence>
<evidence type="ECO:0000305" key="5"/>
<evidence type="ECO:0000312" key="6">
    <source>
        <dbReference type="EMBL" id="EIE79467.1"/>
    </source>
</evidence>
<evidence type="ECO:0000312" key="7">
    <source>
        <dbReference type="Proteomes" id="UP000009138"/>
    </source>
</evidence>
<accession>I1BTD7</accession>
<protein>
    <recommendedName>
        <fullName evidence="4">Glucosylceramidase</fullName>
        <ecNumber evidence="3">3.2.1.45</ecNumber>
    </recommendedName>
    <alternativeName>
        <fullName evidence="4">Endoglycoceramidase-related protein 1</fullName>
        <shortName evidence="4">EGCrP1</shortName>
    </alternativeName>
    <alternativeName>
        <fullName evidence="4">Glucocerebrosidase</fullName>
    </alternativeName>
</protein>
<feature type="chain" id="PRO_0000451756" description="Glucosylceramidase">
    <location>
        <begin position="1"/>
        <end position="683"/>
    </location>
</feature>
<feature type="active site" description="Proton donor" evidence="2">
    <location>
        <position position="254"/>
    </location>
</feature>
<feature type="active site" description="Nucleophile" evidence="2">
    <location>
        <position position="483"/>
    </location>
</feature>
<feature type="mutagenesis site" description="Abolishes glucosylceramidase activity." evidence="3">
    <original>E</original>
    <variation>Q</variation>
    <location>
        <position position="254"/>
    </location>
</feature>
<feature type="mutagenesis site" description="Abolishes glucosylceramidase activity." evidence="3">
    <original>E</original>
    <variation>Q</variation>
    <location>
        <position position="483"/>
    </location>
</feature>
<proteinExistence type="evidence at protein level"/>
<gene>
    <name evidence="4" type="primary">ERC1</name>
    <name evidence="6" type="ORF">RO3G_04172</name>
</gene>
<sequence length="683" mass="78542">MTHPDRSAHDLNVPIQHSGRWFQDNLGRTLLLRGINVCGSSKLPTRPYPGSTHLYDDILFWDHRNVSFVNRPFPLEDAHEHFSRLSAWGLTLIRLLVPWESIEHEGPGCYDEEYIDYLRQLIEMMPRYGIKCIIDPHQDTWSRFSGGSGAPGWTFEVAGLNIKHFKETGAAYVHNTNAVPGDPLPMVWPTNYTKLASCTMFTLFFAGDTFAPHRTYQSQSIQQFLNHHFIEAYRHLAERLSDLEAVLAFEFMNEPHPGYIGLDHLDSFDPIMNLLFGDSPTPLQSFALGDGIPQTVDVYIKSWPFPTKKSHDRVINASQTSAWFSGCVWKEHGVWTVDDQGVPRLVNTHYFSKHPKTGEKISFYEDFYKPLVNRYVAAIQSVKKEYYCLVEPLANEKPPVYNEHDHHHNVIFSPHWYDLDSVFYKKFNARMTHDVQCLQRGGNVFSATYFGKRGAKKNYRGQIKNIKEDGLLNMGEKPCIMGEVGIPMDLNNKMAFEDDNYENHVHFMDAIIYALETNLISFTLWNYDVFNDHEYGDHWNGENFSIYSVKKSEEDYMRHDDGNSKLSKKHLYDGGRVLEAVLRPYAAKVAGTPVSAEFNIDTLQYTFSFIPDCKGSTTTEIFVPYFHYGNKTIKTDVSFGRCSYIEEFQTLYHQYELNDPLPKLVTITMGILTTESANSCSVM</sequence>
<reference evidence="7" key="1">
    <citation type="journal article" date="2009" name="PLoS Genet.">
        <title>Genomic analysis of the basal lineage fungus Rhizopus oryzae reveals a whole-genome duplication.</title>
        <authorList>
            <person name="Ma L.-J."/>
            <person name="Ibrahim A.S."/>
            <person name="Skory C."/>
            <person name="Grabherr M.G."/>
            <person name="Burger G."/>
            <person name="Butler M."/>
            <person name="Elias M."/>
            <person name="Idnurm A."/>
            <person name="Lang B.F."/>
            <person name="Sone T."/>
            <person name="Abe A."/>
            <person name="Calvo S.E."/>
            <person name="Corrochano L.M."/>
            <person name="Engels R."/>
            <person name="Fu J."/>
            <person name="Hansberg W."/>
            <person name="Kim J.-M."/>
            <person name="Kodira C.D."/>
            <person name="Koehrsen M.J."/>
            <person name="Liu B."/>
            <person name="Miranda-Saavedra D."/>
            <person name="O'Leary S."/>
            <person name="Ortiz-Castellanos L."/>
            <person name="Poulter R."/>
            <person name="Rodriguez-Romero J."/>
            <person name="Ruiz-Herrera J."/>
            <person name="Shen Y.-Q."/>
            <person name="Zeng Q."/>
            <person name="Galagan J."/>
            <person name="Birren B.W."/>
            <person name="Cuomo C.A."/>
            <person name="Wickes B.L."/>
        </authorList>
    </citation>
    <scope>NUCLEOTIDE SEQUENCE [LARGE SCALE GENOMIC DNA]</scope>
    <source>
        <strain evidence="7">RA 99-880 / ATCC MYA-4621 / FGSC 9543 / NRRL 43880</strain>
    </source>
</reference>
<reference evidence="5" key="2">
    <citation type="journal article" date="2012" name="J. Biol. Chem.">
        <title>Quality control of fungus-specific glucosylceramide in Cryptococcus neoformans by endoglycoceramidase-related protein 1 (EGCrP1).</title>
        <authorList>
            <person name="Ishibashi Y."/>
            <person name="Ikeda K."/>
            <person name="Sakaguchi K."/>
            <person name="Okino N."/>
            <person name="Taguchi R."/>
            <person name="Ito M."/>
        </authorList>
    </citation>
    <scope>FUNCTION</scope>
    <scope>CATALYTIC ACTIVITY</scope>
    <scope>ACTIVITY REGULATION</scope>
    <scope>BIOPHYSICOCHEMICAL PROPERTIES</scope>
    <scope>MUTAGENESIS OF GLU-254 AND GLU-483</scope>
    <source>
        <strain>NBRC 9364</strain>
    </source>
</reference>